<comment type="catalytic activity">
    <reaction evidence="1">
        <text>tRNA(Lys) + L-lysine + ATP = L-lysyl-tRNA(Lys) + AMP + diphosphate</text>
        <dbReference type="Rhea" id="RHEA:20792"/>
        <dbReference type="Rhea" id="RHEA-COMP:9696"/>
        <dbReference type="Rhea" id="RHEA-COMP:9697"/>
        <dbReference type="ChEBI" id="CHEBI:30616"/>
        <dbReference type="ChEBI" id="CHEBI:32551"/>
        <dbReference type="ChEBI" id="CHEBI:33019"/>
        <dbReference type="ChEBI" id="CHEBI:78442"/>
        <dbReference type="ChEBI" id="CHEBI:78529"/>
        <dbReference type="ChEBI" id="CHEBI:456215"/>
        <dbReference type="EC" id="6.1.1.6"/>
    </reaction>
</comment>
<comment type="cofactor">
    <cofactor evidence="1">
        <name>Mg(2+)</name>
        <dbReference type="ChEBI" id="CHEBI:18420"/>
    </cofactor>
    <text evidence="1">Binds 3 Mg(2+) ions per subunit.</text>
</comment>
<comment type="subunit">
    <text evidence="1">Homodimer.</text>
</comment>
<comment type="subcellular location">
    <subcellularLocation>
        <location evidence="1">Cytoplasm</location>
    </subcellularLocation>
</comment>
<comment type="similarity">
    <text evidence="1">Belongs to the class-II aminoacyl-tRNA synthetase family.</text>
</comment>
<dbReference type="EC" id="6.1.1.6" evidence="1"/>
<dbReference type="EMBL" id="CU459141">
    <property type="protein sequence ID" value="CAM87623.1"/>
    <property type="molecule type" value="Genomic_DNA"/>
</dbReference>
<dbReference type="RefSeq" id="WP_000193744.1">
    <property type="nucleotide sequence ID" value="NZ_JBDGFB010000015.1"/>
</dbReference>
<dbReference type="SMR" id="B0V9L5"/>
<dbReference type="EnsemblBacteria" id="CAM87623">
    <property type="protein sequence ID" value="CAM87623"/>
    <property type="gene ID" value="ABAYE2794"/>
</dbReference>
<dbReference type="KEGG" id="aby:ABAYE2794"/>
<dbReference type="HOGENOM" id="CLU_008255_6_0_6"/>
<dbReference type="GO" id="GO:0005829">
    <property type="term" value="C:cytosol"/>
    <property type="evidence" value="ECO:0007669"/>
    <property type="project" value="TreeGrafter"/>
</dbReference>
<dbReference type="GO" id="GO:0005524">
    <property type="term" value="F:ATP binding"/>
    <property type="evidence" value="ECO:0007669"/>
    <property type="project" value="UniProtKB-UniRule"/>
</dbReference>
<dbReference type="GO" id="GO:0004824">
    <property type="term" value="F:lysine-tRNA ligase activity"/>
    <property type="evidence" value="ECO:0007669"/>
    <property type="project" value="UniProtKB-UniRule"/>
</dbReference>
<dbReference type="GO" id="GO:0000287">
    <property type="term" value="F:magnesium ion binding"/>
    <property type="evidence" value="ECO:0007669"/>
    <property type="project" value="UniProtKB-UniRule"/>
</dbReference>
<dbReference type="GO" id="GO:0000049">
    <property type="term" value="F:tRNA binding"/>
    <property type="evidence" value="ECO:0007669"/>
    <property type="project" value="TreeGrafter"/>
</dbReference>
<dbReference type="GO" id="GO:0006430">
    <property type="term" value="P:lysyl-tRNA aminoacylation"/>
    <property type="evidence" value="ECO:0007669"/>
    <property type="project" value="UniProtKB-UniRule"/>
</dbReference>
<dbReference type="CDD" id="cd00775">
    <property type="entry name" value="LysRS_core"/>
    <property type="match status" value="1"/>
</dbReference>
<dbReference type="CDD" id="cd04322">
    <property type="entry name" value="LysRS_N"/>
    <property type="match status" value="1"/>
</dbReference>
<dbReference type="FunFam" id="2.40.50.140:FF:000024">
    <property type="entry name" value="Lysine--tRNA ligase"/>
    <property type="match status" value="1"/>
</dbReference>
<dbReference type="FunFam" id="3.30.930.10:FF:000001">
    <property type="entry name" value="Lysine--tRNA ligase"/>
    <property type="match status" value="1"/>
</dbReference>
<dbReference type="Gene3D" id="3.30.930.10">
    <property type="entry name" value="Bira Bifunctional Protein, Domain 2"/>
    <property type="match status" value="1"/>
</dbReference>
<dbReference type="Gene3D" id="2.40.50.140">
    <property type="entry name" value="Nucleic acid-binding proteins"/>
    <property type="match status" value="1"/>
</dbReference>
<dbReference type="HAMAP" id="MF_00252">
    <property type="entry name" value="Lys_tRNA_synth_class2"/>
    <property type="match status" value="1"/>
</dbReference>
<dbReference type="InterPro" id="IPR004364">
    <property type="entry name" value="Aa-tRNA-synt_II"/>
</dbReference>
<dbReference type="InterPro" id="IPR006195">
    <property type="entry name" value="aa-tRNA-synth_II"/>
</dbReference>
<dbReference type="InterPro" id="IPR045864">
    <property type="entry name" value="aa-tRNA-synth_II/BPL/LPL"/>
</dbReference>
<dbReference type="InterPro" id="IPR002313">
    <property type="entry name" value="Lys-tRNA-ligase_II"/>
</dbReference>
<dbReference type="InterPro" id="IPR044136">
    <property type="entry name" value="Lys-tRNA-ligase_II_N"/>
</dbReference>
<dbReference type="InterPro" id="IPR018149">
    <property type="entry name" value="Lys-tRNA-synth_II_C"/>
</dbReference>
<dbReference type="InterPro" id="IPR012340">
    <property type="entry name" value="NA-bd_OB-fold"/>
</dbReference>
<dbReference type="InterPro" id="IPR004365">
    <property type="entry name" value="NA-bd_OB_tRNA"/>
</dbReference>
<dbReference type="NCBIfam" id="TIGR00499">
    <property type="entry name" value="lysS_bact"/>
    <property type="match status" value="1"/>
</dbReference>
<dbReference type="NCBIfam" id="NF001756">
    <property type="entry name" value="PRK00484.1"/>
    <property type="match status" value="1"/>
</dbReference>
<dbReference type="PANTHER" id="PTHR42918:SF15">
    <property type="entry name" value="LYSINE--TRNA LIGASE, CHLOROPLASTIC_MITOCHONDRIAL"/>
    <property type="match status" value="1"/>
</dbReference>
<dbReference type="PANTHER" id="PTHR42918">
    <property type="entry name" value="LYSYL-TRNA SYNTHETASE"/>
    <property type="match status" value="1"/>
</dbReference>
<dbReference type="Pfam" id="PF00152">
    <property type="entry name" value="tRNA-synt_2"/>
    <property type="match status" value="1"/>
</dbReference>
<dbReference type="Pfam" id="PF01336">
    <property type="entry name" value="tRNA_anti-codon"/>
    <property type="match status" value="1"/>
</dbReference>
<dbReference type="PRINTS" id="PR00982">
    <property type="entry name" value="TRNASYNTHLYS"/>
</dbReference>
<dbReference type="SUPFAM" id="SSF55681">
    <property type="entry name" value="Class II aaRS and biotin synthetases"/>
    <property type="match status" value="1"/>
</dbReference>
<dbReference type="SUPFAM" id="SSF50249">
    <property type="entry name" value="Nucleic acid-binding proteins"/>
    <property type="match status" value="1"/>
</dbReference>
<dbReference type="PROSITE" id="PS50862">
    <property type="entry name" value="AA_TRNA_LIGASE_II"/>
    <property type="match status" value="1"/>
</dbReference>
<keyword id="KW-0030">Aminoacyl-tRNA synthetase</keyword>
<keyword id="KW-0067">ATP-binding</keyword>
<keyword id="KW-0963">Cytoplasm</keyword>
<keyword id="KW-0436">Ligase</keyword>
<keyword id="KW-0460">Magnesium</keyword>
<keyword id="KW-0479">Metal-binding</keyword>
<keyword id="KW-0547">Nucleotide-binding</keyword>
<keyword id="KW-0648">Protein biosynthesis</keyword>
<gene>
    <name evidence="1" type="primary">lysS</name>
    <name type="ordered locus">ABAYE2794</name>
</gene>
<proteinExistence type="inferred from homology"/>
<feature type="chain" id="PRO_1000101090" description="Lysine--tRNA ligase">
    <location>
        <begin position="1"/>
        <end position="509"/>
    </location>
</feature>
<feature type="binding site" evidence="1">
    <location>
        <position position="418"/>
    </location>
    <ligand>
        <name>Mg(2+)</name>
        <dbReference type="ChEBI" id="CHEBI:18420"/>
        <label>1</label>
    </ligand>
</feature>
<feature type="binding site" evidence="1">
    <location>
        <position position="425"/>
    </location>
    <ligand>
        <name>Mg(2+)</name>
        <dbReference type="ChEBI" id="CHEBI:18420"/>
        <label>1</label>
    </ligand>
</feature>
<feature type="binding site" evidence="1">
    <location>
        <position position="425"/>
    </location>
    <ligand>
        <name>Mg(2+)</name>
        <dbReference type="ChEBI" id="CHEBI:18420"/>
        <label>2</label>
    </ligand>
</feature>
<sequence length="509" mass="58146">MTQQNAQSTSEPTISENDLIAQRHAKLKQIQDVAKETGKSPWPNTFKREHYAADLQEQFKDQSKEQIESAEHVYVKVAGRVMLNRGSFMVIQDMTGRIQLYVDRKGLPKDTLETIKGLDLGDIIAAEGYIGRSGKGDLYVHLEGFELLTKSLRPLPDKFHGLNDTEVKYRKRYLDLIVNEETRKTFEIRAKVVAGIRAFLTNERFMEVETPMMHVIPGGASARPFETHHNALDMPLFLRIAPELYLKRLVVGGFERVFEINRNFRNEGVSTRHNPEFTMIEFYQAYADYKDLMALTENMLEKLALDILGTTDVPYQGEVFSFKGPFKKISMFDAILENNPQFTPENVGDREFLAKFVREELKEEVKPGFGLGKLQTIVFEETVETKLRQPTFITEYPAETSPLARRNDDNPHITDRFEFFIGGRELANGFSELNDPIDQAERFQAQVAEKDAGDDEAMHYDAEFVEALEYGLPPTAGEGIGIDRLVMLFADAPSIRDVILFPHMRRKEG</sequence>
<evidence type="ECO:0000255" key="1">
    <source>
        <dbReference type="HAMAP-Rule" id="MF_00252"/>
    </source>
</evidence>
<protein>
    <recommendedName>
        <fullName evidence="1">Lysine--tRNA ligase</fullName>
        <ecNumber evidence="1">6.1.1.6</ecNumber>
    </recommendedName>
    <alternativeName>
        <fullName evidence="1">Lysyl-tRNA synthetase</fullName>
        <shortName evidence="1">LysRS</shortName>
    </alternativeName>
</protein>
<name>SYK_ACIBY</name>
<accession>B0V9L5</accession>
<organism>
    <name type="scientific">Acinetobacter baumannii (strain AYE)</name>
    <dbReference type="NCBI Taxonomy" id="509173"/>
    <lineage>
        <taxon>Bacteria</taxon>
        <taxon>Pseudomonadati</taxon>
        <taxon>Pseudomonadota</taxon>
        <taxon>Gammaproteobacteria</taxon>
        <taxon>Moraxellales</taxon>
        <taxon>Moraxellaceae</taxon>
        <taxon>Acinetobacter</taxon>
        <taxon>Acinetobacter calcoaceticus/baumannii complex</taxon>
    </lineage>
</organism>
<reference key="1">
    <citation type="journal article" date="2008" name="PLoS ONE">
        <title>Comparative analysis of Acinetobacters: three genomes for three lifestyles.</title>
        <authorList>
            <person name="Vallenet D."/>
            <person name="Nordmann P."/>
            <person name="Barbe V."/>
            <person name="Poirel L."/>
            <person name="Mangenot S."/>
            <person name="Bataille E."/>
            <person name="Dossat C."/>
            <person name="Gas S."/>
            <person name="Kreimeyer A."/>
            <person name="Lenoble P."/>
            <person name="Oztas S."/>
            <person name="Poulain J."/>
            <person name="Segurens B."/>
            <person name="Robert C."/>
            <person name="Abergel C."/>
            <person name="Claverie J.-M."/>
            <person name="Raoult D."/>
            <person name="Medigue C."/>
            <person name="Weissenbach J."/>
            <person name="Cruveiller S."/>
        </authorList>
    </citation>
    <scope>NUCLEOTIDE SEQUENCE [LARGE SCALE GENOMIC DNA]</scope>
    <source>
        <strain>AYE</strain>
    </source>
</reference>